<name>VSP7_PROMU</name>
<reference key="1">
    <citation type="submission" date="1998-10" db="EMBL/GenBank/DDBJ databases">
        <title>Serpentokallikreins from Taiwan habu.</title>
        <authorList>
            <person name="Chiou S.-H."/>
            <person name="Hung C.-C."/>
        </authorList>
    </citation>
    <scope>NUCLEOTIDE SEQUENCE [MRNA]</scope>
    <source>
        <tissue>Venom gland</tissue>
    </source>
</reference>
<dbReference type="EC" id="3.4.21.-"/>
<dbReference type="EMBL" id="AF098262">
    <property type="protein sequence ID" value="AAG27253.1"/>
    <property type="molecule type" value="mRNA"/>
</dbReference>
<dbReference type="RefSeq" id="NP_001310176.1">
    <property type="nucleotide sequence ID" value="NM_001323247.1"/>
</dbReference>
<dbReference type="SMR" id="Q9DG84"/>
<dbReference type="MEROPS" id="S01.345"/>
<dbReference type="GeneID" id="107287553"/>
<dbReference type="KEGG" id="pmur:107287553"/>
<dbReference type="OrthoDB" id="546450at2759"/>
<dbReference type="GO" id="GO:0005576">
    <property type="term" value="C:extracellular region"/>
    <property type="evidence" value="ECO:0007669"/>
    <property type="project" value="UniProtKB-SubCell"/>
</dbReference>
<dbReference type="GO" id="GO:0030141">
    <property type="term" value="C:secretory granule"/>
    <property type="evidence" value="ECO:0007669"/>
    <property type="project" value="TreeGrafter"/>
</dbReference>
<dbReference type="GO" id="GO:0004252">
    <property type="term" value="F:serine-type endopeptidase activity"/>
    <property type="evidence" value="ECO:0007669"/>
    <property type="project" value="InterPro"/>
</dbReference>
<dbReference type="GO" id="GO:0090729">
    <property type="term" value="F:toxin activity"/>
    <property type="evidence" value="ECO:0007669"/>
    <property type="project" value="UniProtKB-KW"/>
</dbReference>
<dbReference type="GO" id="GO:0006508">
    <property type="term" value="P:proteolysis"/>
    <property type="evidence" value="ECO:0007669"/>
    <property type="project" value="UniProtKB-KW"/>
</dbReference>
<dbReference type="CDD" id="cd00190">
    <property type="entry name" value="Tryp_SPc"/>
    <property type="match status" value="1"/>
</dbReference>
<dbReference type="FunFam" id="2.40.10.10:FF:000158">
    <property type="entry name" value="Thrombin-like enzyme saxthrombin"/>
    <property type="match status" value="1"/>
</dbReference>
<dbReference type="FunFam" id="2.40.10.10:FF:000153">
    <property type="entry name" value="Venom plasminogen activator TSV-PA"/>
    <property type="match status" value="1"/>
</dbReference>
<dbReference type="Gene3D" id="2.40.10.10">
    <property type="entry name" value="Trypsin-like serine proteases"/>
    <property type="match status" value="2"/>
</dbReference>
<dbReference type="InterPro" id="IPR009003">
    <property type="entry name" value="Peptidase_S1_PA"/>
</dbReference>
<dbReference type="InterPro" id="IPR043504">
    <property type="entry name" value="Peptidase_S1_PA_chymotrypsin"/>
</dbReference>
<dbReference type="InterPro" id="IPR001314">
    <property type="entry name" value="Peptidase_S1A"/>
</dbReference>
<dbReference type="InterPro" id="IPR001254">
    <property type="entry name" value="Trypsin_dom"/>
</dbReference>
<dbReference type="InterPro" id="IPR018114">
    <property type="entry name" value="TRYPSIN_HIS"/>
</dbReference>
<dbReference type="InterPro" id="IPR033116">
    <property type="entry name" value="TRYPSIN_SER"/>
</dbReference>
<dbReference type="PANTHER" id="PTHR24271:SF47">
    <property type="entry name" value="KALLIKREIN-1"/>
    <property type="match status" value="1"/>
</dbReference>
<dbReference type="PANTHER" id="PTHR24271">
    <property type="entry name" value="KALLIKREIN-RELATED"/>
    <property type="match status" value="1"/>
</dbReference>
<dbReference type="Pfam" id="PF00089">
    <property type="entry name" value="Trypsin"/>
    <property type="match status" value="1"/>
</dbReference>
<dbReference type="PRINTS" id="PR00722">
    <property type="entry name" value="CHYMOTRYPSIN"/>
</dbReference>
<dbReference type="SMART" id="SM00020">
    <property type="entry name" value="Tryp_SPc"/>
    <property type="match status" value="1"/>
</dbReference>
<dbReference type="SUPFAM" id="SSF50494">
    <property type="entry name" value="Trypsin-like serine proteases"/>
    <property type="match status" value="1"/>
</dbReference>
<dbReference type="PROSITE" id="PS50240">
    <property type="entry name" value="TRYPSIN_DOM"/>
    <property type="match status" value="1"/>
</dbReference>
<dbReference type="PROSITE" id="PS00134">
    <property type="entry name" value="TRYPSIN_HIS"/>
    <property type="match status" value="1"/>
</dbReference>
<dbReference type="PROSITE" id="PS00135">
    <property type="entry name" value="TRYPSIN_SER"/>
    <property type="match status" value="1"/>
</dbReference>
<organism>
    <name type="scientific">Protobothrops mucrosquamatus</name>
    <name type="common">Taiwan habu</name>
    <name type="synonym">Trimeresurus mucrosquamatus</name>
    <dbReference type="NCBI Taxonomy" id="103944"/>
    <lineage>
        <taxon>Eukaryota</taxon>
        <taxon>Metazoa</taxon>
        <taxon>Chordata</taxon>
        <taxon>Craniata</taxon>
        <taxon>Vertebrata</taxon>
        <taxon>Euteleostomi</taxon>
        <taxon>Lepidosauria</taxon>
        <taxon>Squamata</taxon>
        <taxon>Bifurcata</taxon>
        <taxon>Unidentata</taxon>
        <taxon>Episquamata</taxon>
        <taxon>Toxicofera</taxon>
        <taxon>Serpentes</taxon>
        <taxon>Colubroidea</taxon>
        <taxon>Viperidae</taxon>
        <taxon>Crotalinae</taxon>
        <taxon>Protobothrops</taxon>
    </lineage>
</organism>
<comment type="function">
    <text evidence="1">Snake venom serine protease that may act in the hemostasis system of the prey.</text>
</comment>
<comment type="subunit">
    <text evidence="1">Monomer.</text>
</comment>
<comment type="subcellular location">
    <subcellularLocation>
        <location>Secreted</location>
    </subcellularLocation>
</comment>
<comment type="tissue specificity">
    <text>Expressed by the venom gland.</text>
</comment>
<comment type="similarity">
    <text evidence="3">Belongs to the peptidase S1 family. Snake venom subfamily.</text>
</comment>
<proteinExistence type="evidence at transcript level"/>
<evidence type="ECO:0000250" key="1"/>
<evidence type="ECO:0000255" key="2"/>
<evidence type="ECO:0000255" key="3">
    <source>
        <dbReference type="PROSITE-ProRule" id="PRU00274"/>
    </source>
</evidence>
<sequence>MVLIRVLANLLILQLSYAQKSSELVIGGDECNINEHPFLVLVYYDDYQCGGTLINEEWVLTAAHCNGENMEIYLGMHSKKVPNKDRRRRVPKEKFFCDSSKNYTKWNKDIMLIRLNRPVRKSAHIAPLSLPSSPPSVGSVCRIMGWGTISPTKVTLPDVPRCANINLLDYEVCRAVYPELPATSRTLCAGILEGGKDSCGGDSGGPLICNGQFQGIVSWGGDPCAQPHEPGLYTNVFDHLDWIKGIIAGNTDVTCPL</sequence>
<keyword id="KW-1015">Disulfide bond</keyword>
<keyword id="KW-0325">Glycoprotein</keyword>
<keyword id="KW-1199">Hemostasis impairing toxin</keyword>
<keyword id="KW-0378">Hydrolase</keyword>
<keyword id="KW-0645">Protease</keyword>
<keyword id="KW-0964">Secreted</keyword>
<keyword id="KW-0720">Serine protease</keyword>
<keyword id="KW-0732">Signal</keyword>
<keyword id="KW-0800">Toxin</keyword>
<keyword id="KW-0865">Zymogen</keyword>
<feature type="signal peptide" evidence="1">
    <location>
        <begin position="1"/>
        <end position="18"/>
    </location>
</feature>
<feature type="propeptide" id="PRO_0000028419" evidence="1">
    <location>
        <begin position="19"/>
        <end position="24"/>
    </location>
</feature>
<feature type="chain" id="PRO_0000028420" description="Snake venom serine protease serpentokallikrein-2">
    <location>
        <begin position="25"/>
        <end position="257"/>
    </location>
</feature>
<feature type="domain" description="Peptidase S1" evidence="3">
    <location>
        <begin position="25"/>
        <end position="248"/>
    </location>
</feature>
<feature type="active site" description="Charge relay system" evidence="1">
    <location>
        <position position="64"/>
    </location>
</feature>
<feature type="active site" description="Charge relay system" evidence="1">
    <location>
        <position position="109"/>
    </location>
</feature>
<feature type="active site" description="Charge relay system" evidence="1">
    <location>
        <position position="203"/>
    </location>
</feature>
<feature type="glycosylation site" description="N-linked (GlcNAc...) asparagine" evidence="2">
    <location>
        <position position="102"/>
    </location>
</feature>
<feature type="disulfide bond" evidence="3">
    <location>
        <begin position="31"/>
        <end position="162"/>
    </location>
</feature>
<feature type="disulfide bond" evidence="3">
    <location>
        <begin position="49"/>
        <end position="65"/>
    </location>
</feature>
<feature type="disulfide bond" evidence="3">
    <location>
        <begin position="97"/>
        <end position="255"/>
    </location>
</feature>
<feature type="disulfide bond" evidence="3">
    <location>
        <begin position="141"/>
        <end position="209"/>
    </location>
</feature>
<feature type="disulfide bond" evidence="3">
    <location>
        <begin position="173"/>
        <end position="188"/>
    </location>
</feature>
<feature type="disulfide bond" evidence="3">
    <location>
        <begin position="199"/>
        <end position="224"/>
    </location>
</feature>
<accession>Q9DG84</accession>
<protein>
    <recommendedName>
        <fullName>Snake venom serine protease serpentokallikrein-2</fullName>
        <shortName>SVSP</shortName>
        <ecNumber>3.4.21.-</ecNumber>
    </recommendedName>
</protein>